<organism>
    <name type="scientific">Autographa californica nuclear polyhedrosis virus</name>
    <name type="common">AcMNPV</name>
    <dbReference type="NCBI Taxonomy" id="46015"/>
    <lineage>
        <taxon>Viruses</taxon>
        <taxon>Viruses incertae sedis</taxon>
        <taxon>Naldaviricetes</taxon>
        <taxon>Lefavirales</taxon>
        <taxon>Baculoviridae</taxon>
        <taxon>Alphabaculovirus</taxon>
        <taxon>Alphabaculovirus aucalifornicae</taxon>
    </lineage>
</organism>
<reference key="1">
    <citation type="journal article" date="1988" name="J. Virol.">
        <title>Functional mapping of Autographa california nuclear polyhedrosis virus genes required for late gene expression.</title>
        <authorList>
            <person name="Guarino L.A."/>
            <person name="Summers M.D."/>
        </authorList>
    </citation>
    <scope>NUCLEOTIDE SEQUENCE [GENOMIC DNA]</scope>
    <source>
        <strain>E2</strain>
    </source>
</reference>
<reference key="2">
    <citation type="journal article" date="1992" name="Virology">
        <title>Sequence, genomic organization of the EcoRI-A fragment of Autographa californica nuclear polyhedrosis virus, and identification of a viral-encoded protein resembling the outer capsid protein VP8 of rotavirus.</title>
        <authorList>
            <person name="Braunagel S.C."/>
            <person name="Daniel K.D."/>
            <person name="Reilly L.M."/>
            <person name="Guarino L.A."/>
            <person name="Hong T."/>
            <person name="Summers M.D."/>
        </authorList>
    </citation>
    <scope>NUCLEOTIDE SEQUENCE [GENOMIC DNA]</scope>
    <scope>SEQUENCE REVISION</scope>
    <source>
        <strain>E2</strain>
    </source>
</reference>
<reference key="3">
    <citation type="journal article" date="1994" name="Virology">
        <title>The complete DNA sequence of Autographa californica nuclear polyhedrosis virus.</title>
        <authorList>
            <person name="Ayres M.D."/>
            <person name="Howard S.C."/>
            <person name="Kuzio J."/>
            <person name="Lopez-Ferber M."/>
            <person name="Possee R.D."/>
        </authorList>
    </citation>
    <scope>NUCLEOTIDE SEQUENCE [LARGE SCALE GENOMIC DNA]</scope>
    <source>
        <strain>C6</strain>
    </source>
</reference>
<reference key="4">
    <citation type="journal article" date="2007" name="Virology">
        <title>ac18 is not essential for the propagation of Autographa californica multiple nucleopolyhedrovirus.</title>
        <authorList>
            <person name="Wang Y."/>
            <person name="Wu W."/>
            <person name="Li Z."/>
            <person name="Yuan M."/>
            <person name="Feng G."/>
            <person name="Yu Q."/>
            <person name="Yang K."/>
            <person name="Pang Y."/>
        </authorList>
    </citation>
    <scope>SUBCELLULAR LOCATION</scope>
    <scope>FUNCTION</scope>
    <scope>INDUCTION</scope>
</reference>
<name>AC18_NPVAC</name>
<dbReference type="EMBL" id="M18857">
    <property type="protein sequence ID" value="AAA66810.1"/>
    <property type="status" value="ALT_SEQ"/>
    <property type="molecule type" value="Genomic_DNA"/>
</dbReference>
<dbReference type="EMBL" id="M96361">
    <property type="protein sequence ID" value="AAA66788.1"/>
    <property type="molecule type" value="Genomic_DNA"/>
</dbReference>
<dbReference type="EMBL" id="L22858">
    <property type="protein sequence ID" value="AAA66648.1"/>
    <property type="molecule type" value="Genomic_DNA"/>
</dbReference>
<dbReference type="PIR" id="B72852">
    <property type="entry name" value="B72852"/>
</dbReference>
<dbReference type="PIR" id="C29891">
    <property type="entry name" value="WMNV49"/>
</dbReference>
<dbReference type="PIR" id="C44221">
    <property type="entry name" value="C44221"/>
</dbReference>
<dbReference type="KEGG" id="vg:1403850"/>
<dbReference type="OrthoDB" id="4723at10239"/>
<dbReference type="Proteomes" id="UP000008292">
    <property type="component" value="Segment"/>
</dbReference>
<dbReference type="GO" id="GO:0030430">
    <property type="term" value="C:host cell cytoplasm"/>
    <property type="evidence" value="ECO:0007669"/>
    <property type="project" value="UniProtKB-SubCell"/>
</dbReference>
<dbReference type="GO" id="GO:0042025">
    <property type="term" value="C:host cell nucleus"/>
    <property type="evidence" value="ECO:0007669"/>
    <property type="project" value="UniProtKB-SubCell"/>
</dbReference>
<dbReference type="InterPro" id="IPR010785">
    <property type="entry name" value="AcMNPV_AC18"/>
</dbReference>
<dbReference type="Pfam" id="PF07134">
    <property type="entry name" value="AcMNPV_Orf18"/>
    <property type="match status" value="1"/>
</dbReference>
<accession>P12828</accession>
<organismHost>
    <name type="scientific">Lepidoptera</name>
    <name type="common">butterflies and moths</name>
    <dbReference type="NCBI Taxonomy" id="7088"/>
</organismHost>
<protein>
    <recommendedName>
        <fullName>Protein AC18</fullName>
    </recommendedName>
</protein>
<comment type="function">
    <text evidence="1">May play a role in occlusion-derived virions (ODV) formation and/or regulation of late viral gene expression.</text>
</comment>
<comment type="subcellular location">
    <subcellularLocation>
        <location evidence="1">Host nucleus</location>
    </subcellularLocation>
    <subcellularLocation>
        <location evidence="1">Host cytoplasm</location>
    </subcellularLocation>
    <text evidence="1">Localizes within the host nucleus few hours after infection while in the late phase of virus infection mainly localizes into the intranuclear ring zone where occlusion-derived virions (ODVs) formation occurs.</text>
</comment>
<comment type="induction">
    <text evidence="1">Early protein.</text>
</comment>
<evidence type="ECO:0000269" key="1">
    <source>
    </source>
</evidence>
<gene>
    <name type="primary">DA41</name>
    <name type="ORF">ORF18</name>
</gene>
<proteinExistence type="evidence at transcript level"/>
<keyword id="KW-0244">Early protein</keyword>
<keyword id="KW-1035">Host cytoplasm</keyword>
<keyword id="KW-1048">Host nucleus</keyword>
<keyword id="KW-1185">Reference proteome</keyword>
<sequence>MERLLNQLNLGVLPYITTKDIEDRLRDKIVAKAKLAFIKDCFEAVVCENGGLFVLTGGAAVTCHIDDDRSALKCIDFDYYGFCAKMFCNLQTNLQKCVDQHYAELDVLTRQVYMSDPLVVLKCYQNGAYRLNGQINLHLNRHIKCIKTQYNDEFDLVRFALQIDITSADGVDEYTDNGVKITTAPLSFNVFFVNVRIMKRPFNADRCIKNFSLFGNEYHVLVSSLQRVLNDQLMCLLKDIFTNKFDYKIERRLKHLKRLFANLPAESYNSCVNDHTDMCLYKEQNETITNFVKKILDISGPALGCRKLMHIYLTTDTFSGQLPAYLTHYVNYPHKSLCDQNWKRFMSCIFSLY</sequence>
<feature type="chain" id="PRO_0000132861" description="Protein AC18">
    <location>
        <begin position="1"/>
        <end position="353"/>
    </location>
</feature>